<sequence>MKRNYQPSRVKRARTHGFRARMATAGGRKVLSRRRKKGRYKLTVSNEKLGKKY</sequence>
<dbReference type="EMBL" id="CP000348">
    <property type="protein sequence ID" value="ABJ80255.1"/>
    <property type="molecule type" value="Genomic_DNA"/>
</dbReference>
<dbReference type="RefSeq" id="WP_002724440.1">
    <property type="nucleotide sequence ID" value="NC_008508.1"/>
</dbReference>
<dbReference type="SMR" id="Q04XE0"/>
<dbReference type="GeneID" id="61172324"/>
<dbReference type="KEGG" id="lbl:LBL_2938"/>
<dbReference type="HOGENOM" id="CLU_129938_2_0_12"/>
<dbReference type="GO" id="GO:1990904">
    <property type="term" value="C:ribonucleoprotein complex"/>
    <property type="evidence" value="ECO:0007669"/>
    <property type="project" value="UniProtKB-KW"/>
</dbReference>
<dbReference type="GO" id="GO:0005840">
    <property type="term" value="C:ribosome"/>
    <property type="evidence" value="ECO:0007669"/>
    <property type="project" value="UniProtKB-KW"/>
</dbReference>
<dbReference type="GO" id="GO:0003735">
    <property type="term" value="F:structural constituent of ribosome"/>
    <property type="evidence" value="ECO:0007669"/>
    <property type="project" value="InterPro"/>
</dbReference>
<dbReference type="GO" id="GO:0006412">
    <property type="term" value="P:translation"/>
    <property type="evidence" value="ECO:0007669"/>
    <property type="project" value="UniProtKB-UniRule"/>
</dbReference>
<dbReference type="FunFam" id="1.10.287.3980:FF:000001">
    <property type="entry name" value="Mitochondrial ribosomal protein L34"/>
    <property type="match status" value="1"/>
</dbReference>
<dbReference type="Gene3D" id="1.10.287.3980">
    <property type="match status" value="1"/>
</dbReference>
<dbReference type="HAMAP" id="MF_00391">
    <property type="entry name" value="Ribosomal_bL34"/>
    <property type="match status" value="1"/>
</dbReference>
<dbReference type="InterPro" id="IPR000271">
    <property type="entry name" value="Ribosomal_bL34"/>
</dbReference>
<dbReference type="InterPro" id="IPR020939">
    <property type="entry name" value="Ribosomal_bL34_CS"/>
</dbReference>
<dbReference type="NCBIfam" id="TIGR01030">
    <property type="entry name" value="rpmH_bact"/>
    <property type="match status" value="1"/>
</dbReference>
<dbReference type="PANTHER" id="PTHR14503:SF4">
    <property type="entry name" value="LARGE RIBOSOMAL SUBUNIT PROTEIN BL34M"/>
    <property type="match status" value="1"/>
</dbReference>
<dbReference type="PANTHER" id="PTHR14503">
    <property type="entry name" value="MITOCHONDRIAL RIBOSOMAL PROTEIN 34 FAMILY MEMBER"/>
    <property type="match status" value="1"/>
</dbReference>
<dbReference type="Pfam" id="PF00468">
    <property type="entry name" value="Ribosomal_L34"/>
    <property type="match status" value="1"/>
</dbReference>
<dbReference type="PROSITE" id="PS00784">
    <property type="entry name" value="RIBOSOMAL_L34"/>
    <property type="match status" value="1"/>
</dbReference>
<accession>Q04XE0</accession>
<name>RL34_LEPBL</name>
<evidence type="ECO:0000255" key="1">
    <source>
        <dbReference type="HAMAP-Rule" id="MF_00391"/>
    </source>
</evidence>
<evidence type="ECO:0000305" key="2"/>
<protein>
    <recommendedName>
        <fullName evidence="1">Large ribosomal subunit protein bL34</fullName>
    </recommendedName>
    <alternativeName>
        <fullName evidence="2">50S ribosomal protein L34</fullName>
    </alternativeName>
</protein>
<comment type="similarity">
    <text evidence="1">Belongs to the bacterial ribosomal protein bL34 family.</text>
</comment>
<keyword id="KW-0687">Ribonucleoprotein</keyword>
<keyword id="KW-0689">Ribosomal protein</keyword>
<gene>
    <name evidence="1" type="primary">rpmH</name>
    <name type="ordered locus">LBL_2938</name>
</gene>
<organism>
    <name type="scientific">Leptospira borgpetersenii serovar Hardjo-bovis (strain L550)</name>
    <dbReference type="NCBI Taxonomy" id="355276"/>
    <lineage>
        <taxon>Bacteria</taxon>
        <taxon>Pseudomonadati</taxon>
        <taxon>Spirochaetota</taxon>
        <taxon>Spirochaetia</taxon>
        <taxon>Leptospirales</taxon>
        <taxon>Leptospiraceae</taxon>
        <taxon>Leptospira</taxon>
    </lineage>
</organism>
<proteinExistence type="inferred from homology"/>
<reference key="1">
    <citation type="journal article" date="2006" name="Proc. Natl. Acad. Sci. U.S.A.">
        <title>Genome reduction in Leptospira borgpetersenii reflects limited transmission potential.</title>
        <authorList>
            <person name="Bulach D.M."/>
            <person name="Zuerner R.L."/>
            <person name="Wilson P."/>
            <person name="Seemann T."/>
            <person name="McGrath A."/>
            <person name="Cullen P.A."/>
            <person name="Davis J."/>
            <person name="Johnson M."/>
            <person name="Kuczek E."/>
            <person name="Alt D.P."/>
            <person name="Peterson-Burch B."/>
            <person name="Coppel R.L."/>
            <person name="Rood J.I."/>
            <person name="Davies J.K."/>
            <person name="Adler B."/>
        </authorList>
    </citation>
    <scope>NUCLEOTIDE SEQUENCE [LARGE SCALE GENOMIC DNA]</scope>
    <source>
        <strain>L550</strain>
    </source>
</reference>
<feature type="chain" id="PRO_1000013366" description="Large ribosomal subunit protein bL34">
    <location>
        <begin position="1"/>
        <end position="53"/>
    </location>
</feature>